<organism>
    <name type="scientific">Xanthium strumarium</name>
    <name type="common">Rough cocklebur</name>
    <dbReference type="NCBI Taxonomy" id="318068"/>
    <lineage>
        <taxon>Eukaryota</taxon>
        <taxon>Viridiplantae</taxon>
        <taxon>Streptophyta</taxon>
        <taxon>Embryophyta</taxon>
        <taxon>Tracheophyta</taxon>
        <taxon>Spermatophyta</taxon>
        <taxon>Magnoliopsida</taxon>
        <taxon>eudicotyledons</taxon>
        <taxon>Gunneridae</taxon>
        <taxon>Pentapetalae</taxon>
        <taxon>asterids</taxon>
        <taxon>campanulids</taxon>
        <taxon>Asterales</taxon>
        <taxon>Asteraceae</taxon>
        <taxon>Asteroideae</taxon>
        <taxon>Heliantheae alliance</taxon>
        <taxon>Heliantheae</taxon>
        <taxon>Xanthium</taxon>
    </lineage>
</organism>
<comment type="function">
    <text evidence="3">Sesquiterpene synthase involved in the biosynthesis of volatile compounds (PubMed:26858282). Mediates the conversion of (2E,6E)-farnesyl diphosphate (FPP) into (+)-(R)-germacrene A (PubMed:26858282).</text>
</comment>
<comment type="catalytic activity">
    <reaction evidence="3">
        <text>(2E,6E)-farnesyl diphosphate = (+)-(R)-germacrene A + diphosphate</text>
        <dbReference type="Rhea" id="RHEA:12516"/>
        <dbReference type="ChEBI" id="CHEBI:33019"/>
        <dbReference type="ChEBI" id="CHEBI:41595"/>
        <dbReference type="ChEBI" id="CHEBI:175763"/>
        <dbReference type="EC" id="4.2.3.23"/>
    </reaction>
    <physiologicalReaction direction="left-to-right" evidence="3">
        <dbReference type="Rhea" id="RHEA:12517"/>
    </physiologicalReaction>
</comment>
<comment type="cofactor">
    <cofactor evidence="1">
        <name>Mg(2+)</name>
        <dbReference type="ChEBI" id="CHEBI:18420"/>
    </cofactor>
    <text evidence="1">Binds 3 Mg(2+) ions per subunit.</text>
</comment>
<comment type="pathway">
    <text evidence="6">Secondary metabolite biosynthesis; terpenoid biosynthesis.</text>
</comment>
<comment type="subunit">
    <text evidence="1">Monomer.</text>
</comment>
<comment type="subcellular location">
    <subcellularLocation>
        <location evidence="2">Cytoplasm</location>
    </subcellularLocation>
</comment>
<comment type="tissue specificity">
    <text evidence="3">Highly expressed in glandular trichomes (PubMed:26858282). Expressed in roots and leaves (PubMed:26858282).</text>
</comment>
<comment type="domain">
    <text evidence="7">The Asp-Asp-Xaa-Xaa-Asp/Glu (DDXXD/E) motif is important for the catalytic activity, presumably through binding to Mg(2+).</text>
</comment>
<comment type="similarity">
    <text evidence="6">Belongs to the terpene synthase family. Tpsa subfamily.</text>
</comment>
<sequence length="559" mass="64560">MAAVGANATLLTNTKSTVEPVRPLANFPPSVWGDMFLSFSLDNSKMEEYAKAMEKPKQEVRRLILDPTMDSNKKLSLIYVVHRLGLTYMFLKEIEGQLDRLFEEFNLEDYVDVDLHTISINFQAFRHLGYKLPCDVFNKFKNNDSNAFKESIASDVRGLLGLYESAQLRVKGEKILDDASAFAETKLKSLVNTLEGSLAQQVKQALKRPFHQGMPMVEARLYFTNYQEEFSKYDSLLKLAKLHFNYLQLQQKEELRIVSKWWKDMRFQETTPYIRDRVPEIYLWILGLYFEPKYSLARIIATKITLFLVVLDDTYDAYGTLEELRLLTHAINRWDMRAMSDIPEYIRPFYKILLDEYAELEKQLAKEGRLKSVIASKEAFQDIARGYIEEAEWTNSGYVASFPEYMKNGLITSAYNVISKSALVGMGEVVSADALAWYESHPKILQASELISRLQDDVMTYQFERERGQSATGVDSYIKTYGVSEKEAIEELKKMIENAWKDINEGCLKPREVSMDLLAPILNLARMIDVVYRYDDGFTFPGKTLKEYITLLFVDSLPM</sequence>
<reference key="1">
    <citation type="submission" date="2014-01" db="EMBL/GenBank/DDBJ databases">
        <title>Xanthium strumarium germacrene A synthase (GAS) mRNA.</title>
        <authorList>
            <person name="Chen F.F."/>
            <person name="Zhang Y.S."/>
        </authorList>
    </citation>
    <scope>NUCLEOTIDE SEQUENCE [MRNA]</scope>
    <source>
        <tissue>Trichome gland</tissue>
    </source>
</reference>
<reference key="2">
    <citation type="journal article" date="2016" name="Plant Cell Physiol.">
        <title>Identification and functional characterization of sesquiterpene synthases from Xanthium strumarium.</title>
        <authorList>
            <person name="Li Y."/>
            <person name="Chen F."/>
            <person name="Li Z."/>
            <person name="Li C."/>
            <person name="Zhang Y."/>
        </authorList>
    </citation>
    <scope>FUNCTION</scope>
    <scope>CATALYTIC ACTIVITY</scope>
    <scope>TISSUE SPECIFICITY</scope>
    <scope>MOTIF</scope>
</reference>
<name>TPS3_XANST</name>
<dbReference type="EC" id="4.2.3.23" evidence="3"/>
<dbReference type="EMBL" id="KJ194511">
    <property type="protein sequence ID" value="AJT60315.1"/>
    <property type="molecule type" value="mRNA"/>
</dbReference>
<dbReference type="SMR" id="A0A0D4D912"/>
<dbReference type="UniPathway" id="UPA00213"/>
<dbReference type="GO" id="GO:0005737">
    <property type="term" value="C:cytoplasm"/>
    <property type="evidence" value="ECO:0007669"/>
    <property type="project" value="UniProtKB-SubCell"/>
</dbReference>
<dbReference type="GO" id="GO:0034005">
    <property type="term" value="F:germacrene-A synthase activity"/>
    <property type="evidence" value="ECO:0007669"/>
    <property type="project" value="UniProtKB-EC"/>
</dbReference>
<dbReference type="GO" id="GO:0000287">
    <property type="term" value="F:magnesium ion binding"/>
    <property type="evidence" value="ECO:0007669"/>
    <property type="project" value="InterPro"/>
</dbReference>
<dbReference type="GO" id="GO:0016102">
    <property type="term" value="P:diterpenoid biosynthetic process"/>
    <property type="evidence" value="ECO:0007669"/>
    <property type="project" value="InterPro"/>
</dbReference>
<dbReference type="GO" id="GO:0046246">
    <property type="term" value="P:terpene biosynthetic process"/>
    <property type="evidence" value="ECO:0007669"/>
    <property type="project" value="UniProtKB-ARBA"/>
</dbReference>
<dbReference type="CDD" id="cd00684">
    <property type="entry name" value="Terpene_cyclase_plant_C1"/>
    <property type="match status" value="1"/>
</dbReference>
<dbReference type="FunFam" id="1.10.600.10:FF:000007">
    <property type="entry name" value="Isoprene synthase, chloroplastic"/>
    <property type="match status" value="1"/>
</dbReference>
<dbReference type="FunFam" id="1.50.10.130:FF:000001">
    <property type="entry name" value="Isoprene synthase, chloroplastic"/>
    <property type="match status" value="1"/>
</dbReference>
<dbReference type="Gene3D" id="1.10.600.10">
    <property type="entry name" value="Farnesyl Diphosphate Synthase"/>
    <property type="match status" value="1"/>
</dbReference>
<dbReference type="Gene3D" id="1.50.10.130">
    <property type="entry name" value="Terpene synthase, N-terminal domain"/>
    <property type="match status" value="1"/>
</dbReference>
<dbReference type="InterPro" id="IPR008949">
    <property type="entry name" value="Isoprenoid_synthase_dom_sf"/>
</dbReference>
<dbReference type="InterPro" id="IPR034741">
    <property type="entry name" value="Terpene_cyclase-like_1_C"/>
</dbReference>
<dbReference type="InterPro" id="IPR044814">
    <property type="entry name" value="Terpene_cyclase_plant_C1"/>
</dbReference>
<dbReference type="InterPro" id="IPR001906">
    <property type="entry name" value="Terpene_synth_N"/>
</dbReference>
<dbReference type="InterPro" id="IPR036965">
    <property type="entry name" value="Terpene_synth_N_sf"/>
</dbReference>
<dbReference type="InterPro" id="IPR050148">
    <property type="entry name" value="Terpene_synthase-like"/>
</dbReference>
<dbReference type="InterPro" id="IPR005630">
    <property type="entry name" value="Terpene_synthase_metal-bd"/>
</dbReference>
<dbReference type="InterPro" id="IPR008930">
    <property type="entry name" value="Terpenoid_cyclase/PrenylTrfase"/>
</dbReference>
<dbReference type="PANTHER" id="PTHR31225:SF120">
    <property type="entry name" value="GERMACRENE-A SYNTHASE"/>
    <property type="match status" value="1"/>
</dbReference>
<dbReference type="PANTHER" id="PTHR31225">
    <property type="entry name" value="OS04G0344100 PROTEIN-RELATED"/>
    <property type="match status" value="1"/>
</dbReference>
<dbReference type="Pfam" id="PF01397">
    <property type="entry name" value="Terpene_synth"/>
    <property type="match status" value="1"/>
</dbReference>
<dbReference type="Pfam" id="PF03936">
    <property type="entry name" value="Terpene_synth_C"/>
    <property type="match status" value="1"/>
</dbReference>
<dbReference type="SFLD" id="SFLDS00005">
    <property type="entry name" value="Isoprenoid_Synthase_Type_I"/>
    <property type="match status" value="1"/>
</dbReference>
<dbReference type="SFLD" id="SFLDG01019">
    <property type="entry name" value="Terpene_Cyclase_Like_1_C_Termi"/>
    <property type="match status" value="1"/>
</dbReference>
<dbReference type="SUPFAM" id="SSF48239">
    <property type="entry name" value="Terpenoid cyclases/Protein prenyltransferases"/>
    <property type="match status" value="1"/>
</dbReference>
<dbReference type="SUPFAM" id="SSF48576">
    <property type="entry name" value="Terpenoid synthases"/>
    <property type="match status" value="1"/>
</dbReference>
<accession>A0A0D4D912</accession>
<evidence type="ECO:0000250" key="1">
    <source>
        <dbReference type="UniProtKB" id="Q40577"/>
    </source>
</evidence>
<evidence type="ECO:0000250" key="2">
    <source>
        <dbReference type="UniProtKB" id="Q6Q3H2"/>
    </source>
</evidence>
<evidence type="ECO:0000269" key="3">
    <source>
    </source>
</evidence>
<evidence type="ECO:0000303" key="4">
    <source>
    </source>
</evidence>
<evidence type="ECO:0000303" key="5">
    <source ref="1"/>
</evidence>
<evidence type="ECO:0000305" key="6"/>
<evidence type="ECO:0000305" key="7">
    <source>
    </source>
</evidence>
<feature type="chain" id="PRO_0000455108" description="Sesquiterpene synthase TPS3">
    <location>
        <begin position="1"/>
        <end position="559"/>
    </location>
</feature>
<feature type="short sequence motif" description="DDXXD motif" evidence="7">
    <location>
        <begin position="312"/>
        <end position="316"/>
    </location>
</feature>
<feature type="binding site" evidence="1">
    <location>
        <position position="275"/>
    </location>
    <ligand>
        <name>(2E,6E)-farnesyl diphosphate</name>
        <dbReference type="ChEBI" id="CHEBI:175763"/>
    </ligand>
</feature>
<feature type="binding site" evidence="1">
    <location>
        <position position="312"/>
    </location>
    <ligand>
        <name>(2E,6E)-farnesyl diphosphate</name>
        <dbReference type="ChEBI" id="CHEBI:175763"/>
    </ligand>
</feature>
<feature type="binding site" evidence="1">
    <location>
        <position position="312"/>
    </location>
    <ligand>
        <name>Mg(2+)</name>
        <dbReference type="ChEBI" id="CHEBI:18420"/>
        <label>1</label>
    </ligand>
</feature>
<feature type="binding site" evidence="1">
    <location>
        <position position="312"/>
    </location>
    <ligand>
        <name>Mg(2+)</name>
        <dbReference type="ChEBI" id="CHEBI:18420"/>
        <label>2</label>
    </ligand>
</feature>
<feature type="binding site" evidence="1">
    <location>
        <position position="316"/>
    </location>
    <ligand>
        <name>(2E,6E)-farnesyl diphosphate</name>
        <dbReference type="ChEBI" id="CHEBI:175763"/>
    </ligand>
</feature>
<feature type="binding site" evidence="1">
    <location>
        <position position="316"/>
    </location>
    <ligand>
        <name>Mg(2+)</name>
        <dbReference type="ChEBI" id="CHEBI:18420"/>
        <label>1</label>
    </ligand>
</feature>
<feature type="binding site" evidence="1">
    <location>
        <position position="316"/>
    </location>
    <ligand>
        <name>Mg(2+)</name>
        <dbReference type="ChEBI" id="CHEBI:18420"/>
        <label>2</label>
    </ligand>
</feature>
<feature type="binding site" evidence="1">
    <location>
        <position position="453"/>
    </location>
    <ligand>
        <name>(2E,6E)-farnesyl diphosphate</name>
        <dbReference type="ChEBI" id="CHEBI:175763"/>
    </ligand>
</feature>
<feature type="binding site" evidence="1">
    <location>
        <position position="456"/>
    </location>
    <ligand>
        <name>(2E,6E)-farnesyl diphosphate</name>
        <dbReference type="ChEBI" id="CHEBI:175763"/>
    </ligand>
</feature>
<feature type="binding site" evidence="1">
    <location>
        <position position="456"/>
    </location>
    <ligand>
        <name>Mg(2+)</name>
        <dbReference type="ChEBI" id="CHEBI:18420"/>
        <label>3</label>
    </ligand>
</feature>
<feature type="binding site" evidence="1">
    <location>
        <position position="460"/>
    </location>
    <ligand>
        <name>Mg(2+)</name>
        <dbReference type="ChEBI" id="CHEBI:18420"/>
        <label>3</label>
    </ligand>
</feature>
<feature type="binding site" evidence="1">
    <location>
        <position position="464"/>
    </location>
    <ligand>
        <name>Mg(2+)</name>
        <dbReference type="ChEBI" id="CHEBI:18420"/>
        <label>3</label>
    </ligand>
</feature>
<keyword id="KW-0963">Cytoplasm</keyword>
<keyword id="KW-0456">Lyase</keyword>
<keyword id="KW-0460">Magnesium</keyword>
<keyword id="KW-0479">Metal-binding</keyword>
<gene>
    <name evidence="4" type="primary">TPS3</name>
    <name evidence="5" type="synonym">GAS</name>
</gene>
<protein>
    <recommendedName>
        <fullName evidence="6">Sesquiterpene synthase TPS3</fullName>
    </recommendedName>
    <alternativeName>
        <fullName evidence="4">Germacrene A synthase</fullName>
        <ecNumber evidence="3">4.2.3.23</ecNumber>
    </alternativeName>
    <alternativeName>
        <fullName evidence="4">Terpene synthase 3</fullName>
        <shortName evidence="4">XsTPS3</shortName>
    </alternativeName>
</protein>
<proteinExistence type="evidence at protein level"/>